<protein>
    <recommendedName>
        <fullName evidence="1">Nucleoside triphosphate pyrophosphatase</fullName>
        <ecNumber evidence="1">3.6.1.9</ecNumber>
    </recommendedName>
    <alternativeName>
        <fullName evidence="1">Nucleotide pyrophosphatase</fullName>
        <shortName evidence="1">Nucleotide PPase</shortName>
    </alternativeName>
</protein>
<dbReference type="EC" id="3.6.1.9" evidence="1"/>
<dbReference type="EMBL" id="AP010918">
    <property type="protein sequence ID" value="BAH27585.1"/>
    <property type="molecule type" value="Genomic_DNA"/>
</dbReference>
<dbReference type="RefSeq" id="WP_010950862.1">
    <property type="nucleotide sequence ID" value="NZ_CP014566.1"/>
</dbReference>
<dbReference type="SMR" id="C1AH56"/>
<dbReference type="KEGG" id="mbt:JTY_3307"/>
<dbReference type="HOGENOM" id="CLU_040416_1_2_11"/>
<dbReference type="GO" id="GO:0005737">
    <property type="term" value="C:cytoplasm"/>
    <property type="evidence" value="ECO:0007669"/>
    <property type="project" value="UniProtKB-SubCell"/>
</dbReference>
<dbReference type="GO" id="GO:0047429">
    <property type="term" value="F:nucleoside triphosphate diphosphatase activity"/>
    <property type="evidence" value="ECO:0007669"/>
    <property type="project" value="UniProtKB-EC"/>
</dbReference>
<dbReference type="GO" id="GO:0009117">
    <property type="term" value="P:nucleotide metabolic process"/>
    <property type="evidence" value="ECO:0007669"/>
    <property type="project" value="UniProtKB-KW"/>
</dbReference>
<dbReference type="CDD" id="cd00555">
    <property type="entry name" value="Maf"/>
    <property type="match status" value="1"/>
</dbReference>
<dbReference type="FunFam" id="3.90.950.10:FF:000010">
    <property type="entry name" value="Nucleoside triphosphate pyrophosphatase"/>
    <property type="match status" value="1"/>
</dbReference>
<dbReference type="Gene3D" id="3.90.950.10">
    <property type="match status" value="1"/>
</dbReference>
<dbReference type="HAMAP" id="MF_00528">
    <property type="entry name" value="Maf"/>
    <property type="match status" value="1"/>
</dbReference>
<dbReference type="InterPro" id="IPR029001">
    <property type="entry name" value="ITPase-like_fam"/>
</dbReference>
<dbReference type="InterPro" id="IPR003697">
    <property type="entry name" value="Maf-like"/>
</dbReference>
<dbReference type="NCBIfam" id="TIGR00172">
    <property type="entry name" value="maf"/>
    <property type="match status" value="1"/>
</dbReference>
<dbReference type="PANTHER" id="PTHR43213">
    <property type="entry name" value="BIFUNCTIONAL DTTP/UTP PYROPHOSPHATASE/METHYLTRANSFERASE PROTEIN-RELATED"/>
    <property type="match status" value="1"/>
</dbReference>
<dbReference type="PANTHER" id="PTHR43213:SF5">
    <property type="entry name" value="BIFUNCTIONAL DTTP_UTP PYROPHOSPHATASE_METHYLTRANSFERASE PROTEIN-RELATED"/>
    <property type="match status" value="1"/>
</dbReference>
<dbReference type="Pfam" id="PF02545">
    <property type="entry name" value="Maf"/>
    <property type="match status" value="1"/>
</dbReference>
<dbReference type="PIRSF" id="PIRSF006305">
    <property type="entry name" value="Maf"/>
    <property type="match status" value="1"/>
</dbReference>
<dbReference type="SUPFAM" id="SSF52972">
    <property type="entry name" value="ITPase-like"/>
    <property type="match status" value="1"/>
</dbReference>
<proteinExistence type="inferred from homology"/>
<gene>
    <name type="ordered locus">JTY_3307</name>
</gene>
<reference key="1">
    <citation type="journal article" date="2009" name="Vaccine">
        <title>Whole genome sequence analysis of Mycobacterium bovis bacillus Calmette-Guerin (BCG) Tokyo 172: a comparative study of BCG vaccine substrains.</title>
        <authorList>
            <person name="Seki M."/>
            <person name="Honda I."/>
            <person name="Fujita I."/>
            <person name="Yano I."/>
            <person name="Yamamoto S."/>
            <person name="Koyama A."/>
        </authorList>
    </citation>
    <scope>NUCLEOTIDE SEQUENCE [LARGE SCALE GENOMIC DNA]</scope>
    <source>
        <strain>BCG / Tokyo 172 / ATCC 35737 / TMC 1019</strain>
    </source>
</reference>
<evidence type="ECO:0000255" key="1">
    <source>
        <dbReference type="HAMAP-Rule" id="MF_00528"/>
    </source>
</evidence>
<organism>
    <name type="scientific">Mycobacterium bovis (strain BCG / Tokyo 172 / ATCC 35737 / TMC 1019)</name>
    <dbReference type="NCBI Taxonomy" id="561275"/>
    <lineage>
        <taxon>Bacteria</taxon>
        <taxon>Bacillati</taxon>
        <taxon>Actinomycetota</taxon>
        <taxon>Actinomycetes</taxon>
        <taxon>Mycobacteriales</taxon>
        <taxon>Mycobacteriaceae</taxon>
        <taxon>Mycobacterium</taxon>
        <taxon>Mycobacterium tuberculosis complex</taxon>
    </lineage>
</organism>
<name>NTPP_MYCBT</name>
<accession>C1AH56</accession>
<sequence length="222" mass="23026">MTRLVLGSASPGRLKVLRDAGIEPLVIASHVDEDVVIAALGPDAVPSDVVCVLAAAKAAQVATTLTGTQRIVAADCVVVACDSMLYIEGRLLGKPASIDEAREQWRSMAGRAGQLYTGHGVIRLQDNKTVYRSAETAITTVYFGTPSASDLEAYLASGESLRVAGGFTLDGLGGWFIDGVQGNPSNVIGLSLPLLRSLVQRCGLSVAALWAGNAGGPAHKQQ</sequence>
<comment type="function">
    <text evidence="1">Nucleoside triphosphate pyrophosphatase. May have a dual role in cell division arrest and in preventing the incorporation of modified nucleotides into cellular nucleic acids.</text>
</comment>
<comment type="catalytic activity">
    <reaction evidence="1">
        <text>a ribonucleoside 5'-triphosphate + H2O = a ribonucleoside 5'-phosphate + diphosphate + H(+)</text>
        <dbReference type="Rhea" id="RHEA:23996"/>
        <dbReference type="ChEBI" id="CHEBI:15377"/>
        <dbReference type="ChEBI" id="CHEBI:15378"/>
        <dbReference type="ChEBI" id="CHEBI:33019"/>
        <dbReference type="ChEBI" id="CHEBI:58043"/>
        <dbReference type="ChEBI" id="CHEBI:61557"/>
        <dbReference type="EC" id="3.6.1.9"/>
    </reaction>
</comment>
<comment type="catalytic activity">
    <reaction evidence="1">
        <text>a 2'-deoxyribonucleoside 5'-triphosphate + H2O = a 2'-deoxyribonucleoside 5'-phosphate + diphosphate + H(+)</text>
        <dbReference type="Rhea" id="RHEA:44644"/>
        <dbReference type="ChEBI" id="CHEBI:15377"/>
        <dbReference type="ChEBI" id="CHEBI:15378"/>
        <dbReference type="ChEBI" id="CHEBI:33019"/>
        <dbReference type="ChEBI" id="CHEBI:61560"/>
        <dbReference type="ChEBI" id="CHEBI:65317"/>
        <dbReference type="EC" id="3.6.1.9"/>
    </reaction>
</comment>
<comment type="cofactor">
    <cofactor evidence="1">
        <name>a divalent metal cation</name>
        <dbReference type="ChEBI" id="CHEBI:60240"/>
    </cofactor>
</comment>
<comment type="subcellular location">
    <subcellularLocation>
        <location evidence="1">Cytoplasm</location>
    </subcellularLocation>
</comment>
<comment type="similarity">
    <text evidence="1">Belongs to the Maf family.</text>
</comment>
<keyword id="KW-0963">Cytoplasm</keyword>
<keyword id="KW-0378">Hydrolase</keyword>
<keyword id="KW-0546">Nucleotide metabolism</keyword>
<feature type="chain" id="PRO_1000146293" description="Nucleoside triphosphate pyrophosphatase">
    <location>
        <begin position="1"/>
        <end position="222"/>
    </location>
</feature>
<feature type="active site" description="Proton acceptor" evidence="1">
    <location>
        <position position="82"/>
    </location>
</feature>